<feature type="chain" id="PRO_0000054422" description="5-amino-6-(5-phospho-D-ribitylamino)uracil phosphatase YbjI">
    <location>
        <begin position="1"/>
        <end position="271"/>
    </location>
</feature>
<feature type="active site" description="Nucleophile" evidence="1">
    <location>
        <position position="9"/>
    </location>
</feature>
<feature type="binding site" evidence="1">
    <location>
        <position position="9"/>
    </location>
    <ligand>
        <name>Mg(2+)</name>
        <dbReference type="ChEBI" id="CHEBI:18420"/>
    </ligand>
</feature>
<feature type="binding site" evidence="1">
    <location>
        <position position="10"/>
    </location>
    <ligand>
        <name>phosphate</name>
        <dbReference type="ChEBI" id="CHEBI:43474"/>
    </ligand>
</feature>
<feature type="binding site" evidence="1">
    <location>
        <position position="11"/>
    </location>
    <ligand>
        <name>Mg(2+)</name>
        <dbReference type="ChEBI" id="CHEBI:18420"/>
    </ligand>
</feature>
<feature type="binding site" evidence="1">
    <location>
        <begin position="44"/>
        <end position="45"/>
    </location>
    <ligand>
        <name>phosphate</name>
        <dbReference type="ChEBI" id="CHEBI:43474"/>
    </ligand>
</feature>
<feature type="binding site" evidence="1">
    <location>
        <position position="192"/>
    </location>
    <ligand>
        <name>phosphate</name>
        <dbReference type="ChEBI" id="CHEBI:43474"/>
    </ligand>
</feature>
<feature type="binding site" evidence="1">
    <location>
        <position position="215"/>
    </location>
    <ligand>
        <name>Mg(2+)</name>
        <dbReference type="ChEBI" id="CHEBI:18420"/>
    </ligand>
</feature>
<feature type="binding site" evidence="1">
    <location>
        <position position="218"/>
    </location>
    <ligand>
        <name>phosphate</name>
        <dbReference type="ChEBI" id="CHEBI:43474"/>
    </ligand>
</feature>
<organism>
    <name type="scientific">Escherichia coli (strain K12)</name>
    <dbReference type="NCBI Taxonomy" id="83333"/>
    <lineage>
        <taxon>Bacteria</taxon>
        <taxon>Pseudomonadati</taxon>
        <taxon>Pseudomonadota</taxon>
        <taxon>Gammaproteobacteria</taxon>
        <taxon>Enterobacterales</taxon>
        <taxon>Enterobacteriaceae</taxon>
        <taxon>Escherichia</taxon>
    </lineage>
</organism>
<sequence>MSIKLIAVDMDGTFLSDQKTYNRERFMAQYQQMKAQGIRFVVASGNQYYQLISFFPEIANEIAFVAENGGWVVSEGKDVFNGELSKDAFATVVEHLLTRPEVEIIACGKNSAYTLKKYDDAMKTVAEMYYHRLEYVDNFDNLEDIFFKFGLNLSDELIPQVQKALHEAIGDIMVSVHTGNGSIDLIIPGVHKANGLRQLQKLWGIDDSEVVVFGDGGNDIEMLRQAGFSFAMENAGSAVVAAAKYRAGSNNREGVLDVIDKVLKHEAPFDQ</sequence>
<dbReference type="EC" id="3.1.3.104" evidence="4"/>
<dbReference type="EMBL" id="U00096">
    <property type="protein sequence ID" value="AAC73931.2"/>
    <property type="molecule type" value="Genomic_DNA"/>
</dbReference>
<dbReference type="EMBL" id="AP009048">
    <property type="protein sequence ID" value="BAA35548.2"/>
    <property type="molecule type" value="Genomic_DNA"/>
</dbReference>
<dbReference type="PIR" id="D64822">
    <property type="entry name" value="D64822"/>
</dbReference>
<dbReference type="RefSeq" id="NP_415365.4">
    <property type="nucleotide sequence ID" value="NC_000913.3"/>
</dbReference>
<dbReference type="RefSeq" id="WP_000023565.1">
    <property type="nucleotide sequence ID" value="NZ_SSUW01000010.1"/>
</dbReference>
<dbReference type="SMR" id="P75809"/>
<dbReference type="BioGRID" id="4262830">
    <property type="interactions" value="128"/>
</dbReference>
<dbReference type="FunCoup" id="P75809">
    <property type="interactions" value="183"/>
</dbReference>
<dbReference type="STRING" id="511145.b0844"/>
<dbReference type="jPOST" id="P75809"/>
<dbReference type="PaxDb" id="511145-b0844"/>
<dbReference type="DNASU" id="945470"/>
<dbReference type="EnsemblBacteria" id="AAC73931">
    <property type="protein sequence ID" value="AAC73931"/>
    <property type="gene ID" value="b0844"/>
</dbReference>
<dbReference type="GeneID" id="945470"/>
<dbReference type="KEGG" id="ecj:JW5113"/>
<dbReference type="KEGG" id="eco:b0844"/>
<dbReference type="KEGG" id="ecoc:C3026_05275"/>
<dbReference type="PATRIC" id="fig|1411691.4.peg.1434"/>
<dbReference type="EchoBASE" id="EB3442"/>
<dbReference type="eggNOG" id="COG0561">
    <property type="taxonomic scope" value="Bacteria"/>
</dbReference>
<dbReference type="HOGENOM" id="CLU_044146_5_0_6"/>
<dbReference type="InParanoid" id="P75809"/>
<dbReference type="OMA" id="PHNNEEG"/>
<dbReference type="OrthoDB" id="3180855at2"/>
<dbReference type="PhylomeDB" id="P75809"/>
<dbReference type="BioCyc" id="EcoCyc:G6442-MONOMER"/>
<dbReference type="BioCyc" id="MetaCyc:G6442-MONOMER"/>
<dbReference type="UniPathway" id="UPA00275">
    <property type="reaction ID" value="UER00403"/>
</dbReference>
<dbReference type="PRO" id="PR:P75809"/>
<dbReference type="Proteomes" id="UP000000625">
    <property type="component" value="Chromosome"/>
</dbReference>
<dbReference type="GO" id="GO:0005829">
    <property type="term" value="C:cytosol"/>
    <property type="evidence" value="ECO:0000318"/>
    <property type="project" value="GO_Central"/>
</dbReference>
<dbReference type="GO" id="GO:0043726">
    <property type="term" value="F:5-amino-6-(5-phosphoribitylamino)uracil phosphatase activity"/>
    <property type="evidence" value="ECO:0000314"/>
    <property type="project" value="EcoCyc"/>
</dbReference>
<dbReference type="GO" id="GO:0000287">
    <property type="term" value="F:magnesium ion binding"/>
    <property type="evidence" value="ECO:0000314"/>
    <property type="project" value="UniProtKB"/>
</dbReference>
<dbReference type="GO" id="GO:0016791">
    <property type="term" value="F:phosphatase activity"/>
    <property type="evidence" value="ECO:0000314"/>
    <property type="project" value="UniProtKB"/>
</dbReference>
<dbReference type="GO" id="GO:0009231">
    <property type="term" value="P:riboflavin biosynthetic process"/>
    <property type="evidence" value="ECO:0000314"/>
    <property type="project" value="EcoCyc"/>
</dbReference>
<dbReference type="CDD" id="cd07518">
    <property type="entry name" value="HAD_YbiV-Like"/>
    <property type="match status" value="1"/>
</dbReference>
<dbReference type="FunFam" id="3.30.1240.10:FF:000010">
    <property type="entry name" value="5-amino-6-(5-phospho-D-ribitylamino)uracil phosphatase YbjI"/>
    <property type="match status" value="1"/>
</dbReference>
<dbReference type="Gene3D" id="3.30.1240.10">
    <property type="match status" value="1"/>
</dbReference>
<dbReference type="Gene3D" id="3.40.50.1000">
    <property type="entry name" value="HAD superfamily/HAD-like"/>
    <property type="match status" value="1"/>
</dbReference>
<dbReference type="InterPro" id="IPR000150">
    <property type="entry name" value="Cof"/>
</dbReference>
<dbReference type="InterPro" id="IPR036412">
    <property type="entry name" value="HAD-like_sf"/>
</dbReference>
<dbReference type="InterPro" id="IPR006379">
    <property type="entry name" value="HAD-SF_hydro_IIB"/>
</dbReference>
<dbReference type="InterPro" id="IPR023214">
    <property type="entry name" value="HAD_sf"/>
</dbReference>
<dbReference type="NCBIfam" id="TIGR00099">
    <property type="entry name" value="Cof-subfamily"/>
    <property type="match status" value="1"/>
</dbReference>
<dbReference type="NCBIfam" id="TIGR01484">
    <property type="entry name" value="HAD-SF-IIB"/>
    <property type="match status" value="1"/>
</dbReference>
<dbReference type="PANTHER" id="PTHR10000:SF53">
    <property type="entry name" value="5-AMINO-6-(5-PHOSPHO-D-RIBITYLAMINO)URACIL PHOSPHATASE YBJI-RELATED"/>
    <property type="match status" value="1"/>
</dbReference>
<dbReference type="PANTHER" id="PTHR10000">
    <property type="entry name" value="PHOSPHOSERINE PHOSPHATASE"/>
    <property type="match status" value="1"/>
</dbReference>
<dbReference type="Pfam" id="PF08282">
    <property type="entry name" value="Hydrolase_3"/>
    <property type="match status" value="1"/>
</dbReference>
<dbReference type="SFLD" id="SFLDG01144">
    <property type="entry name" value="C2.B.4:_PGP_Like"/>
    <property type="match status" value="1"/>
</dbReference>
<dbReference type="SFLD" id="SFLDG01140">
    <property type="entry name" value="C2.B:_Phosphomannomutase_and_P"/>
    <property type="match status" value="1"/>
</dbReference>
<dbReference type="SUPFAM" id="SSF56784">
    <property type="entry name" value="HAD-like"/>
    <property type="match status" value="1"/>
</dbReference>
<dbReference type="PROSITE" id="PS01229">
    <property type="entry name" value="COF_2"/>
    <property type="match status" value="1"/>
</dbReference>
<accession>P75809</accession>
<protein>
    <recommendedName>
        <fullName evidence="5">5-amino-6-(5-phospho-D-ribitylamino)uracil phosphatase YbjI</fullName>
        <ecNumber evidence="4">3.1.3.104</ecNumber>
    </recommendedName>
</protein>
<evidence type="ECO:0000250" key="1"/>
<evidence type="ECO:0000269" key="2">
    <source>
    </source>
</evidence>
<evidence type="ECO:0000269" key="3">
    <source>
    </source>
</evidence>
<evidence type="ECO:0000269" key="4">
    <source>
    </source>
</evidence>
<evidence type="ECO:0000303" key="5">
    <source>
    </source>
</evidence>
<evidence type="ECO:0000305" key="6"/>
<evidence type="ECO:0000305" key="7">
    <source>
    </source>
</evidence>
<name>YBJI_ECOLI</name>
<proteinExistence type="evidence at protein level"/>
<comment type="function">
    <text evidence="2 3 4">Catalyzes the dephosphorylation of 5-amino-6-(5-phospho-D-ribitylamino)uracil, and thus could be involved in the riboflavin biosynthesis pathway (PubMed:24123841). Is also able to dephosphorylate flavin mononucleotide (FMN), erythrose 4-phosphate and other phosphoric acid esters (PubMed:15808744, PubMed:16990279, PubMed:24123841).</text>
</comment>
<comment type="catalytic activity">
    <reaction evidence="4">
        <text>5-amino-6-(5-phospho-D-ribitylamino)uracil + H2O = 5-amino-6-(D-ribitylamino)uracil + phosphate</text>
        <dbReference type="Rhea" id="RHEA:25197"/>
        <dbReference type="ChEBI" id="CHEBI:15377"/>
        <dbReference type="ChEBI" id="CHEBI:15934"/>
        <dbReference type="ChEBI" id="CHEBI:43474"/>
        <dbReference type="ChEBI" id="CHEBI:58421"/>
        <dbReference type="EC" id="3.1.3.104"/>
    </reaction>
</comment>
<comment type="cofactor">
    <cofactor evidence="3">
        <name>Mg(2+)</name>
        <dbReference type="ChEBI" id="CHEBI:18420"/>
    </cofactor>
    <cofactor evidence="3">
        <name>Mn(2+)</name>
        <dbReference type="ChEBI" id="CHEBI:29035"/>
    </cofactor>
    <cofactor evidence="3">
        <name>Co(2+)</name>
        <dbReference type="ChEBI" id="CHEBI:48828"/>
    </cofactor>
    <cofactor evidence="3">
        <name>Zn(2+)</name>
        <dbReference type="ChEBI" id="CHEBI:29105"/>
    </cofactor>
    <text evidence="3">Magnesium. Can also use other divalent metal cations as manganese, cobalt or zinc.</text>
</comment>
<comment type="biophysicochemical properties">
    <kinetics>
        <KM evidence="4">70 uM for 5-amino-6-(5-phospho-D-ribitylamino)uracil</KM>
        <KM evidence="3">2.3 mM for FMN (in the presence of magnesium ion as cofactor and at pH 9)</KM>
        <KM evidence="3">2.6 mM for Ery4P (in the presence of magnesium ion as cofactor and at pH 9)</KM>
        <Vmax evidence="4">3.0 umol/min/mg enzyme with 5-amino-6-(5-phospho-D-ribitylamino)uracil as substrate</Vmax>
    </kinetics>
    <phDependence>
        <text evidence="3">Optimum pH is 6-7.5.</text>
    </phDependence>
</comment>
<comment type="pathway">
    <text evidence="7">Cofactor biosynthesis; riboflavin biosynthesis; 5-amino-6-(D-ribitylamino)uracil from GTP: step 4/4.</text>
</comment>
<comment type="disruption phenotype">
    <text evidence="4">Cells lacking this gene can grow in the absence of exogenous riboflavin; this may be due to the presence of the functionally redundant protein YigB.</text>
</comment>
<comment type="similarity">
    <text evidence="6">Belongs to the HAD-like hydrolase superfamily. Cof family.</text>
</comment>
<keyword id="KW-0378">Hydrolase</keyword>
<keyword id="KW-0460">Magnesium</keyword>
<keyword id="KW-0479">Metal-binding</keyword>
<keyword id="KW-1185">Reference proteome</keyword>
<gene>
    <name type="primary">ybjI</name>
    <name type="ordered locus">b0844</name>
    <name type="ordered locus">JW5113</name>
</gene>
<reference key="1">
    <citation type="journal article" date="1996" name="DNA Res.">
        <title>A 718-kb DNA sequence of the Escherichia coli K-12 genome corresponding to the 12.7-28.0 min region on the linkage map.</title>
        <authorList>
            <person name="Oshima T."/>
            <person name="Aiba H."/>
            <person name="Baba T."/>
            <person name="Fujita K."/>
            <person name="Hayashi K."/>
            <person name="Honjo A."/>
            <person name="Ikemoto K."/>
            <person name="Inada T."/>
            <person name="Itoh T."/>
            <person name="Kajihara M."/>
            <person name="Kanai K."/>
            <person name="Kashimoto K."/>
            <person name="Kimura S."/>
            <person name="Kitagawa M."/>
            <person name="Makino K."/>
            <person name="Masuda S."/>
            <person name="Miki T."/>
            <person name="Mizobuchi K."/>
            <person name="Mori H."/>
            <person name="Motomura K."/>
            <person name="Nakamura Y."/>
            <person name="Nashimoto H."/>
            <person name="Nishio Y."/>
            <person name="Saito N."/>
            <person name="Sampei G."/>
            <person name="Seki Y."/>
            <person name="Tagami H."/>
            <person name="Takemoto K."/>
            <person name="Wada C."/>
            <person name="Yamamoto Y."/>
            <person name="Yano M."/>
            <person name="Horiuchi T."/>
        </authorList>
    </citation>
    <scope>NUCLEOTIDE SEQUENCE [LARGE SCALE GENOMIC DNA]</scope>
    <source>
        <strain>K12 / W3110 / ATCC 27325 / DSM 5911</strain>
    </source>
</reference>
<reference key="2">
    <citation type="journal article" date="1997" name="Science">
        <title>The complete genome sequence of Escherichia coli K-12.</title>
        <authorList>
            <person name="Blattner F.R."/>
            <person name="Plunkett G. III"/>
            <person name="Bloch C.A."/>
            <person name="Perna N.T."/>
            <person name="Burland V."/>
            <person name="Riley M."/>
            <person name="Collado-Vides J."/>
            <person name="Glasner J.D."/>
            <person name="Rode C.K."/>
            <person name="Mayhew G.F."/>
            <person name="Gregor J."/>
            <person name="Davis N.W."/>
            <person name="Kirkpatrick H.A."/>
            <person name="Goeden M.A."/>
            <person name="Rose D.J."/>
            <person name="Mau B."/>
            <person name="Shao Y."/>
        </authorList>
    </citation>
    <scope>NUCLEOTIDE SEQUENCE [LARGE SCALE GENOMIC DNA]</scope>
    <source>
        <strain>K12 / MG1655 / ATCC 47076</strain>
    </source>
</reference>
<reference key="3">
    <citation type="journal article" date="2006" name="Mol. Syst. Biol.">
        <title>Highly accurate genome sequences of Escherichia coli K-12 strains MG1655 and W3110.</title>
        <authorList>
            <person name="Hayashi K."/>
            <person name="Morooka N."/>
            <person name="Yamamoto Y."/>
            <person name="Fujita K."/>
            <person name="Isono K."/>
            <person name="Choi S."/>
            <person name="Ohtsubo E."/>
            <person name="Baba T."/>
            <person name="Wanner B.L."/>
            <person name="Mori H."/>
            <person name="Horiuchi T."/>
        </authorList>
    </citation>
    <scope>NUCLEOTIDE SEQUENCE [LARGE SCALE GENOMIC DNA]</scope>
    <source>
        <strain>K12 / W3110 / ATCC 27325 / DSM 5911</strain>
    </source>
</reference>
<reference key="4">
    <citation type="journal article" date="1999" name="Electrophoresis">
        <title>Enrichment of low abundance proteins of Escherichia coli by hydroxyapatite chromatography.</title>
        <authorList>
            <person name="Fountoulakis M."/>
            <person name="Takacs M.-F."/>
            <person name="Berndt P."/>
            <person name="Langen H."/>
            <person name="Takacs B."/>
        </authorList>
    </citation>
    <scope>IDENTIFICATION BY MASS SPECTROMETRY</scope>
    <source>
        <strain>B / BL21</strain>
    </source>
</reference>
<reference key="5">
    <citation type="journal article" date="2005" name="FEMS Microbiol. Rev.">
        <title>Enzyme genomics: application of general enzymatic screens to discover new enzymes.</title>
        <authorList>
            <person name="Kuznetsova E."/>
            <person name="Proudfoot M."/>
            <person name="Sanders S.A."/>
            <person name="Reinking J."/>
            <person name="Savchenko A."/>
            <person name="Arrowsmith C.H."/>
            <person name="Edwards A.M."/>
            <person name="Yakunin A.F."/>
        </authorList>
    </citation>
    <scope>FUNCTION AS A PHOSPHATASE</scope>
</reference>
<reference key="6">
    <citation type="journal article" date="2006" name="J. Biol. Chem.">
        <title>Genome-wide analysis of substrate specificities of the Escherichia coli haloacid dehalogenase-like phosphatase family.</title>
        <authorList>
            <person name="Kuznetsova E."/>
            <person name="Proudfoot M."/>
            <person name="Gonzalez C.F."/>
            <person name="Brown G."/>
            <person name="Omelchenko M.V."/>
            <person name="Borozan I."/>
            <person name="Carmel L."/>
            <person name="Wolf Y.I."/>
            <person name="Mori H."/>
            <person name="Savchenko A.V."/>
            <person name="Arrowsmith C.H."/>
            <person name="Koonin E.V."/>
            <person name="Edwards A.M."/>
            <person name="Yakunin A.F."/>
        </authorList>
    </citation>
    <scope>FUNCTION AS A PHOSPHATASE</scope>
    <scope>BIOPHYSICOCHEMICAL PROPERTIES</scope>
    <scope>SUBSTRATE SPECIFICITY</scope>
    <scope>COFACTOR</scope>
</reference>
<reference key="7">
    <citation type="journal article" date="2013" name="ChemBioChem">
        <title>Enzymes from the haloacid dehalogenase (HAD) superfamily catalyse the elusive dephosphorylation step of riboflavin biosynthesis.</title>
        <authorList>
            <person name="Haase I."/>
            <person name="Sarge S."/>
            <person name="Illarionov B."/>
            <person name="Laudert D."/>
            <person name="Hohmann H.P."/>
            <person name="Bacher A."/>
            <person name="Fischer M."/>
        </authorList>
    </citation>
    <scope>FUNCTION</scope>
    <scope>CATALYTIC ACTIVITY</scope>
    <scope>BIOPHYSICOCHEMICAL PROPERTIES</scope>
    <scope>SUBSTRATE SPECIFICITY</scope>
    <scope>PATHWAY</scope>
    <scope>DISRUPTION PHENOTYPE</scope>
</reference>